<evidence type="ECO:0000250" key="1"/>
<evidence type="ECO:0000305" key="2"/>
<keyword id="KW-0975">Bacterial flagellum</keyword>
<keyword id="KW-0997">Cell inner membrane</keyword>
<keyword id="KW-1003">Cell membrane</keyword>
<keyword id="KW-0145">Chemotaxis</keyword>
<keyword id="KW-0283">Flagellar rotation</keyword>
<keyword id="KW-0472">Membrane</keyword>
<keyword id="KW-1185">Reference proteome</keyword>
<comment type="function">
    <text evidence="1">FliN is one of three proteins (FliG, FliN, FliM) that form the rotor-mounted switch complex (C ring), located at the base of the basal body. This complex interacts with the CheY and CheZ chemotaxis proteins, in addition to contacting components of the motor that determine the direction of flagellar rotation (By similarity).</text>
</comment>
<comment type="subcellular location">
    <subcellularLocation>
        <location>Cell inner membrane</location>
        <topology>Peripheral membrane protein</topology>
        <orientation>Cytoplasmic side</orientation>
    </subcellularLocation>
    <subcellularLocation>
        <location>Bacterial flagellum basal body</location>
    </subcellularLocation>
</comment>
<comment type="similarity">
    <text evidence="2">Belongs to the FliN/MopA/SpaO family.</text>
</comment>
<protein>
    <recommendedName>
        <fullName>Flagellar motor switch protein FliN</fullName>
    </recommendedName>
</protein>
<name>FLIN_CAUVC</name>
<proteinExistence type="inferred from homology"/>
<sequence length="110" mass="11668">MAEDNLTLDEFGGAMLASEAPIELSDKTAADLAPVFDVPVNISAVLGRANMSVAQLLQLGQGSILELDRKVGEAIDIYVNNRLVARGEVVVVDERLGVTMTEIIKDGDQG</sequence>
<gene>
    <name type="primary">fliN</name>
    <name type="ordered locus">CC_0908</name>
</gene>
<feature type="chain" id="PRO_0000184117" description="Flagellar motor switch protein FliN">
    <location>
        <begin position="1"/>
        <end position="110"/>
    </location>
</feature>
<organism>
    <name type="scientific">Caulobacter vibrioides (strain ATCC 19089 / CIP 103742 / CB 15)</name>
    <name type="common">Caulobacter crescentus</name>
    <dbReference type="NCBI Taxonomy" id="190650"/>
    <lineage>
        <taxon>Bacteria</taxon>
        <taxon>Pseudomonadati</taxon>
        <taxon>Pseudomonadota</taxon>
        <taxon>Alphaproteobacteria</taxon>
        <taxon>Caulobacterales</taxon>
        <taxon>Caulobacteraceae</taxon>
        <taxon>Caulobacter</taxon>
    </lineage>
</organism>
<dbReference type="EMBL" id="M98855">
    <property type="protein sequence ID" value="AAA66328.1"/>
    <property type="molecule type" value="Genomic_DNA"/>
</dbReference>
<dbReference type="EMBL" id="AE005673">
    <property type="protein sequence ID" value="AAK22892.1"/>
    <property type="molecule type" value="Genomic_DNA"/>
</dbReference>
<dbReference type="EMBL" id="M69228">
    <property type="protein sequence ID" value="AAA23038.1"/>
    <property type="molecule type" value="Genomic_DNA"/>
</dbReference>
<dbReference type="PIR" id="D55544">
    <property type="entry name" value="D55544"/>
</dbReference>
<dbReference type="RefSeq" id="NP_419724.1">
    <property type="nucleotide sequence ID" value="NC_002696.2"/>
</dbReference>
<dbReference type="RefSeq" id="WP_010918792.1">
    <property type="nucleotide sequence ID" value="NC_002696.2"/>
</dbReference>
<dbReference type="SMR" id="Q03593"/>
<dbReference type="STRING" id="190650.CC_0908"/>
<dbReference type="EnsemblBacteria" id="AAK22892">
    <property type="protein sequence ID" value="AAK22892"/>
    <property type="gene ID" value="CC_0908"/>
</dbReference>
<dbReference type="KEGG" id="ccr:CC_0908"/>
<dbReference type="PATRIC" id="fig|190650.5.peg.921"/>
<dbReference type="eggNOG" id="COG1886">
    <property type="taxonomic scope" value="Bacteria"/>
</dbReference>
<dbReference type="HOGENOM" id="CLU_097058_5_1_5"/>
<dbReference type="BioCyc" id="CAULO:CC0908-MONOMER"/>
<dbReference type="Proteomes" id="UP000001816">
    <property type="component" value="Chromosome"/>
</dbReference>
<dbReference type="GO" id="GO:0009425">
    <property type="term" value="C:bacterial-type flagellum basal body"/>
    <property type="evidence" value="ECO:0007669"/>
    <property type="project" value="UniProtKB-SubCell"/>
</dbReference>
<dbReference type="GO" id="GO:0005886">
    <property type="term" value="C:plasma membrane"/>
    <property type="evidence" value="ECO:0007669"/>
    <property type="project" value="UniProtKB-SubCell"/>
</dbReference>
<dbReference type="GO" id="GO:0003774">
    <property type="term" value="F:cytoskeletal motor activity"/>
    <property type="evidence" value="ECO:0007669"/>
    <property type="project" value="InterPro"/>
</dbReference>
<dbReference type="GO" id="GO:0071973">
    <property type="term" value="P:bacterial-type flagellum-dependent cell motility"/>
    <property type="evidence" value="ECO:0007669"/>
    <property type="project" value="InterPro"/>
</dbReference>
<dbReference type="GO" id="GO:0006935">
    <property type="term" value="P:chemotaxis"/>
    <property type="evidence" value="ECO:0007669"/>
    <property type="project" value="UniProtKB-KW"/>
</dbReference>
<dbReference type="Gene3D" id="2.30.330.10">
    <property type="entry name" value="SpoA-like"/>
    <property type="match status" value="1"/>
</dbReference>
<dbReference type="InterPro" id="IPR012826">
    <property type="entry name" value="FliN"/>
</dbReference>
<dbReference type="InterPro" id="IPR001543">
    <property type="entry name" value="FliN-like_C"/>
</dbReference>
<dbReference type="InterPro" id="IPR051469">
    <property type="entry name" value="FliN/MopA/SpaO"/>
</dbReference>
<dbReference type="InterPro" id="IPR001172">
    <property type="entry name" value="FliN_T3SS_HrcQb"/>
</dbReference>
<dbReference type="InterPro" id="IPR036429">
    <property type="entry name" value="SpoA-like_sf"/>
</dbReference>
<dbReference type="NCBIfam" id="TIGR02480">
    <property type="entry name" value="fliN"/>
    <property type="match status" value="1"/>
</dbReference>
<dbReference type="PANTHER" id="PTHR43484">
    <property type="match status" value="1"/>
</dbReference>
<dbReference type="PANTHER" id="PTHR43484:SF1">
    <property type="entry name" value="FLAGELLAR MOTOR SWITCH PROTEIN FLIN"/>
    <property type="match status" value="1"/>
</dbReference>
<dbReference type="Pfam" id="PF01052">
    <property type="entry name" value="FliMN_C"/>
    <property type="match status" value="1"/>
</dbReference>
<dbReference type="PRINTS" id="PR00956">
    <property type="entry name" value="FLGMOTORFLIN"/>
</dbReference>
<dbReference type="SUPFAM" id="SSF101801">
    <property type="entry name" value="Surface presentation of antigens (SPOA)"/>
    <property type="match status" value="1"/>
</dbReference>
<accession>Q03593</accession>
<reference key="1">
    <citation type="journal article" date="1994" name="J. Bacteriol.">
        <title>Multiple structural proteins are required for both transcriptional activation and negative autoregulation of Caulobacter crescentus flagellar genes.</title>
        <authorList>
            <person name="Ramakrishnan G."/>
            <person name="Zhao J.L."/>
            <person name="Newton A."/>
        </authorList>
    </citation>
    <scope>NUCLEOTIDE SEQUENCE [GENOMIC DNA]</scope>
    <source>
        <strain>ATCC 19089 / CIP 103742 / CB 15</strain>
    </source>
</reference>
<reference key="2">
    <citation type="journal article" date="2001" name="Proc. Natl. Acad. Sci. U.S.A.">
        <title>Complete genome sequence of Caulobacter crescentus.</title>
        <authorList>
            <person name="Nierman W.C."/>
            <person name="Feldblyum T.V."/>
            <person name="Laub M.T."/>
            <person name="Paulsen I.T."/>
            <person name="Nelson K.E."/>
            <person name="Eisen J.A."/>
            <person name="Heidelberg J.F."/>
            <person name="Alley M.R.K."/>
            <person name="Ohta N."/>
            <person name="Maddock J.R."/>
            <person name="Potocka I."/>
            <person name="Nelson W.C."/>
            <person name="Newton A."/>
            <person name="Stephens C."/>
            <person name="Phadke N.D."/>
            <person name="Ely B."/>
            <person name="DeBoy R.T."/>
            <person name="Dodson R.J."/>
            <person name="Durkin A.S."/>
            <person name="Gwinn M.L."/>
            <person name="Haft D.H."/>
            <person name="Kolonay J.F."/>
            <person name="Smit J."/>
            <person name="Craven M.B."/>
            <person name="Khouri H.M."/>
            <person name="Shetty J."/>
            <person name="Berry K.J."/>
            <person name="Utterback T.R."/>
            <person name="Tran K."/>
            <person name="Wolf A.M."/>
            <person name="Vamathevan J.J."/>
            <person name="Ermolaeva M.D."/>
            <person name="White O."/>
            <person name="Salzberg S.L."/>
            <person name="Venter J.C."/>
            <person name="Shapiro L."/>
            <person name="Fraser C.M."/>
        </authorList>
    </citation>
    <scope>NUCLEOTIDE SEQUENCE [LARGE SCALE GENOMIC DNA]</scope>
    <source>
        <strain>ATCC 19089 / CIP 103742 / CB 15</strain>
    </source>
</reference>
<reference key="3">
    <citation type="journal article" date="1990" name="Proc. Natl. Acad. Sci. U.S.A.">
        <title>FlbD of Caulobacter crescentus is a homologue of the NtrC (NRI) protein and activates sigma 54-dependent flagellar gene promoters.</title>
        <authorList>
            <person name="Ramakrishnan G."/>
            <person name="Newton A."/>
        </authorList>
    </citation>
    <scope>NUCLEOTIDE SEQUENCE [GENOMIC DNA] OF 10-110</scope>
    <source>
        <strain>ATCC 19089 / CIP 103742 / CB 15</strain>
    </source>
</reference>
<reference key="4">
    <citation type="journal article" date="1992" name="J. Bacteriol.">
        <title>Characterization of the Caulobacter crescentus flbF promoter and identification of the inferred FlbF product as a homolog of the LcrD protein from a Yersinia enterocolitica virulence plasmid.</title>
        <authorList>
            <person name="Sanders L.A."/>
            <person name="van Way S."/>
            <person name="Mullin D.A."/>
        </authorList>
    </citation>
    <scope>NUCLEOTIDE SEQUENCE [GENOMIC DNA] OF 10-110</scope>
</reference>